<comment type="function">
    <text evidence="1">Involved in peptide bond synthesis. Alleviates ribosome stalling that occurs when 3 or more consecutive Pro residues or the sequence PPG is present in a protein, possibly by augmenting the peptidyl transferase activity of the ribosome. Modification of Lys-34 is required for alleviation.</text>
</comment>
<comment type="pathway">
    <text evidence="1">Protein biosynthesis; polypeptide chain elongation.</text>
</comment>
<comment type="subcellular location">
    <subcellularLocation>
        <location evidence="1">Cytoplasm</location>
    </subcellularLocation>
</comment>
<comment type="PTM">
    <text evidence="1">Is beta-lysylated on the epsilon-amino group of Lys-34 by the combined action of EpmA and EpmB, and then hydroxylated on the C5 position of the same residue by EpmC. Lysylation is critical for the stimulatory effect of EF-P on peptide-bond formation. The lysylation moiety would extend toward the peptidyltransferase center and stabilize the terminal 3-CCA end of the tRNA. The hydroxylation of the C5 position on Lys-34 would allow additional potential stabilizing hydrogen-bond interactions with the P-tRNA.</text>
</comment>
<comment type="similarity">
    <text evidence="1">Belongs to the elongation factor P family.</text>
</comment>
<keyword id="KW-0963">Cytoplasm</keyword>
<keyword id="KW-0251">Elongation factor</keyword>
<keyword id="KW-0379">Hydroxylation</keyword>
<keyword id="KW-0648">Protein biosynthesis</keyword>
<dbReference type="EMBL" id="CP000946">
    <property type="protein sequence ID" value="ACA79469.1"/>
    <property type="molecule type" value="Genomic_DNA"/>
</dbReference>
<dbReference type="RefSeq" id="WP_000257278.1">
    <property type="nucleotide sequence ID" value="NZ_MTFT01000012.1"/>
</dbReference>
<dbReference type="SMR" id="B1ITQ1"/>
<dbReference type="GeneID" id="93777677"/>
<dbReference type="KEGG" id="ecl:EcolC_3865"/>
<dbReference type="HOGENOM" id="CLU_074944_0_0_6"/>
<dbReference type="UniPathway" id="UPA00345"/>
<dbReference type="GO" id="GO:0005829">
    <property type="term" value="C:cytosol"/>
    <property type="evidence" value="ECO:0007669"/>
    <property type="project" value="UniProtKB-ARBA"/>
</dbReference>
<dbReference type="GO" id="GO:0003746">
    <property type="term" value="F:translation elongation factor activity"/>
    <property type="evidence" value="ECO:0007669"/>
    <property type="project" value="UniProtKB-UniRule"/>
</dbReference>
<dbReference type="GO" id="GO:0043043">
    <property type="term" value="P:peptide biosynthetic process"/>
    <property type="evidence" value="ECO:0007669"/>
    <property type="project" value="InterPro"/>
</dbReference>
<dbReference type="CDD" id="cd04470">
    <property type="entry name" value="S1_EF-P_repeat_1"/>
    <property type="match status" value="1"/>
</dbReference>
<dbReference type="CDD" id="cd05794">
    <property type="entry name" value="S1_EF-P_repeat_2"/>
    <property type="match status" value="1"/>
</dbReference>
<dbReference type="FunFam" id="2.30.30.30:FF:000003">
    <property type="entry name" value="Elongation factor P"/>
    <property type="match status" value="1"/>
</dbReference>
<dbReference type="FunFam" id="2.40.50.140:FF:000004">
    <property type="entry name" value="Elongation factor P"/>
    <property type="match status" value="1"/>
</dbReference>
<dbReference type="FunFam" id="2.40.50.140:FF:000009">
    <property type="entry name" value="Elongation factor P"/>
    <property type="match status" value="1"/>
</dbReference>
<dbReference type="Gene3D" id="2.30.30.30">
    <property type="match status" value="1"/>
</dbReference>
<dbReference type="Gene3D" id="2.40.50.140">
    <property type="entry name" value="Nucleic acid-binding proteins"/>
    <property type="match status" value="2"/>
</dbReference>
<dbReference type="HAMAP" id="MF_00141">
    <property type="entry name" value="EF_P"/>
    <property type="match status" value="1"/>
</dbReference>
<dbReference type="InterPro" id="IPR015365">
    <property type="entry name" value="Elong-fact-P_C"/>
</dbReference>
<dbReference type="InterPro" id="IPR012340">
    <property type="entry name" value="NA-bd_OB-fold"/>
</dbReference>
<dbReference type="InterPro" id="IPR014722">
    <property type="entry name" value="Rib_uL2_dom2"/>
</dbReference>
<dbReference type="InterPro" id="IPR020599">
    <property type="entry name" value="Transl_elong_fac_P/YeiP"/>
</dbReference>
<dbReference type="InterPro" id="IPR013185">
    <property type="entry name" value="Transl_elong_KOW-like"/>
</dbReference>
<dbReference type="InterPro" id="IPR001059">
    <property type="entry name" value="Transl_elong_P/YeiP_cen"/>
</dbReference>
<dbReference type="InterPro" id="IPR013852">
    <property type="entry name" value="Transl_elong_P/YeiP_CS"/>
</dbReference>
<dbReference type="InterPro" id="IPR011768">
    <property type="entry name" value="Transl_elongation_fac_P"/>
</dbReference>
<dbReference type="InterPro" id="IPR008991">
    <property type="entry name" value="Translation_prot_SH3-like_sf"/>
</dbReference>
<dbReference type="NCBIfam" id="TIGR00038">
    <property type="entry name" value="efp"/>
    <property type="match status" value="1"/>
</dbReference>
<dbReference type="NCBIfam" id="NF001810">
    <property type="entry name" value="PRK00529.1"/>
    <property type="match status" value="1"/>
</dbReference>
<dbReference type="PANTHER" id="PTHR30053">
    <property type="entry name" value="ELONGATION FACTOR P"/>
    <property type="match status" value="1"/>
</dbReference>
<dbReference type="PANTHER" id="PTHR30053:SF12">
    <property type="entry name" value="ELONGATION FACTOR P (EF-P) FAMILY PROTEIN"/>
    <property type="match status" value="1"/>
</dbReference>
<dbReference type="Pfam" id="PF01132">
    <property type="entry name" value="EFP"/>
    <property type="match status" value="1"/>
</dbReference>
<dbReference type="Pfam" id="PF08207">
    <property type="entry name" value="EFP_N"/>
    <property type="match status" value="1"/>
</dbReference>
<dbReference type="Pfam" id="PF09285">
    <property type="entry name" value="Elong-fact-P_C"/>
    <property type="match status" value="1"/>
</dbReference>
<dbReference type="PIRSF" id="PIRSF005901">
    <property type="entry name" value="EF-P"/>
    <property type="match status" value="1"/>
</dbReference>
<dbReference type="SMART" id="SM01185">
    <property type="entry name" value="EFP"/>
    <property type="match status" value="1"/>
</dbReference>
<dbReference type="SMART" id="SM00841">
    <property type="entry name" value="Elong-fact-P_C"/>
    <property type="match status" value="1"/>
</dbReference>
<dbReference type="SUPFAM" id="SSF50249">
    <property type="entry name" value="Nucleic acid-binding proteins"/>
    <property type="match status" value="2"/>
</dbReference>
<dbReference type="SUPFAM" id="SSF50104">
    <property type="entry name" value="Translation proteins SH3-like domain"/>
    <property type="match status" value="1"/>
</dbReference>
<dbReference type="PROSITE" id="PS01275">
    <property type="entry name" value="EFP"/>
    <property type="match status" value="1"/>
</dbReference>
<gene>
    <name evidence="1" type="primary">efp</name>
    <name type="ordered locus">EcolC_3865</name>
</gene>
<accession>B1ITQ1</accession>
<proteinExistence type="inferred from homology"/>
<sequence>MATYYSNDFRAGLKIMLDGEPYAVEASEFVKPGKGQAFARVKLRRLLTGTRVEKTFKSTDSAEGADVVDMNLTYLYNDGEFWHFMNNETFEQLSADAKAIGDNAKWLLDQAECIVTLWNGQPISVTPPNFVELEIVDTDPGLKGDTAGTGGKPATLSTGAVVKVPLFVQIGEVIKVDTRSGEYVSRVK</sequence>
<feature type="chain" id="PRO_1000076513" description="Elongation factor P">
    <location>
        <begin position="1"/>
        <end position="188"/>
    </location>
</feature>
<feature type="modified residue" description="N6-(3,6-diaminohexanoyl)-5-hydroxylysine" evidence="1">
    <location>
        <position position="34"/>
    </location>
</feature>
<name>EFP_ECOLC</name>
<reference key="1">
    <citation type="submission" date="2008-02" db="EMBL/GenBank/DDBJ databases">
        <title>Complete sequence of Escherichia coli C str. ATCC 8739.</title>
        <authorList>
            <person name="Copeland A."/>
            <person name="Lucas S."/>
            <person name="Lapidus A."/>
            <person name="Glavina del Rio T."/>
            <person name="Dalin E."/>
            <person name="Tice H."/>
            <person name="Bruce D."/>
            <person name="Goodwin L."/>
            <person name="Pitluck S."/>
            <person name="Kiss H."/>
            <person name="Brettin T."/>
            <person name="Detter J.C."/>
            <person name="Han C."/>
            <person name="Kuske C.R."/>
            <person name="Schmutz J."/>
            <person name="Larimer F."/>
            <person name="Land M."/>
            <person name="Hauser L."/>
            <person name="Kyrpides N."/>
            <person name="Mikhailova N."/>
            <person name="Ingram L."/>
            <person name="Richardson P."/>
        </authorList>
    </citation>
    <scope>NUCLEOTIDE SEQUENCE [LARGE SCALE GENOMIC DNA]</scope>
    <source>
        <strain>ATCC 8739 / DSM 1576 / NBRC 3972 / NCIMB 8545 / WDCM 00012 / Crooks</strain>
    </source>
</reference>
<protein>
    <recommendedName>
        <fullName evidence="1">Elongation factor P</fullName>
        <shortName evidence="1">EF-P</shortName>
    </recommendedName>
</protein>
<evidence type="ECO:0000255" key="1">
    <source>
        <dbReference type="HAMAP-Rule" id="MF_00141"/>
    </source>
</evidence>
<organism>
    <name type="scientific">Escherichia coli (strain ATCC 8739 / DSM 1576 / NBRC 3972 / NCIMB 8545 / WDCM 00012 / Crooks)</name>
    <dbReference type="NCBI Taxonomy" id="481805"/>
    <lineage>
        <taxon>Bacteria</taxon>
        <taxon>Pseudomonadati</taxon>
        <taxon>Pseudomonadota</taxon>
        <taxon>Gammaproteobacteria</taxon>
        <taxon>Enterobacterales</taxon>
        <taxon>Enterobacteriaceae</taxon>
        <taxon>Escherichia</taxon>
    </lineage>
</organism>